<protein>
    <recommendedName>
        <fullName evidence="1">Exodeoxyribonuclease 7 large subunit</fullName>
        <ecNumber evidence="1">3.1.11.6</ecNumber>
    </recommendedName>
    <alternativeName>
        <fullName evidence="1">Exodeoxyribonuclease VII large subunit</fullName>
        <shortName evidence="1">Exonuclease VII large subunit</shortName>
    </alternativeName>
</protein>
<proteinExistence type="inferred from homology"/>
<dbReference type="EC" id="3.1.11.6" evidence="1"/>
<dbReference type="EMBL" id="AE007869">
    <property type="protein sequence ID" value="AAK86085.2"/>
    <property type="molecule type" value="Genomic_DNA"/>
</dbReference>
<dbReference type="PIR" id="AE2609">
    <property type="entry name" value="AE2609"/>
</dbReference>
<dbReference type="PIR" id="D97391">
    <property type="entry name" value="D97391"/>
</dbReference>
<dbReference type="RefSeq" id="NP_353300.2">
    <property type="nucleotide sequence ID" value="NC_003062.2"/>
</dbReference>
<dbReference type="RefSeq" id="WP_010970779.1">
    <property type="nucleotide sequence ID" value="NC_003062.2"/>
</dbReference>
<dbReference type="SMR" id="Q8UIM4"/>
<dbReference type="STRING" id="176299.Atu0269"/>
<dbReference type="EnsemblBacteria" id="AAK86085">
    <property type="protein sequence ID" value="AAK86085"/>
    <property type="gene ID" value="Atu0269"/>
</dbReference>
<dbReference type="GeneID" id="1132307"/>
<dbReference type="KEGG" id="atu:Atu0269"/>
<dbReference type="PATRIC" id="fig|176299.10.peg.260"/>
<dbReference type="eggNOG" id="COG1570">
    <property type="taxonomic scope" value="Bacteria"/>
</dbReference>
<dbReference type="HOGENOM" id="CLU_023625_3_1_5"/>
<dbReference type="OrthoDB" id="9802795at2"/>
<dbReference type="PhylomeDB" id="Q8UIM4"/>
<dbReference type="Proteomes" id="UP000000813">
    <property type="component" value="Chromosome circular"/>
</dbReference>
<dbReference type="GO" id="GO:0005737">
    <property type="term" value="C:cytoplasm"/>
    <property type="evidence" value="ECO:0007669"/>
    <property type="project" value="UniProtKB-SubCell"/>
</dbReference>
<dbReference type="GO" id="GO:0009318">
    <property type="term" value="C:exodeoxyribonuclease VII complex"/>
    <property type="evidence" value="ECO:0007669"/>
    <property type="project" value="InterPro"/>
</dbReference>
<dbReference type="GO" id="GO:0008855">
    <property type="term" value="F:exodeoxyribonuclease VII activity"/>
    <property type="evidence" value="ECO:0007669"/>
    <property type="project" value="UniProtKB-UniRule"/>
</dbReference>
<dbReference type="GO" id="GO:0003676">
    <property type="term" value="F:nucleic acid binding"/>
    <property type="evidence" value="ECO:0007669"/>
    <property type="project" value="InterPro"/>
</dbReference>
<dbReference type="GO" id="GO:0006308">
    <property type="term" value="P:DNA catabolic process"/>
    <property type="evidence" value="ECO:0007669"/>
    <property type="project" value="UniProtKB-UniRule"/>
</dbReference>
<dbReference type="CDD" id="cd04489">
    <property type="entry name" value="ExoVII_LU_OBF"/>
    <property type="match status" value="1"/>
</dbReference>
<dbReference type="HAMAP" id="MF_00378">
    <property type="entry name" value="Exonuc_7_L"/>
    <property type="match status" value="1"/>
</dbReference>
<dbReference type="InterPro" id="IPR003753">
    <property type="entry name" value="Exonuc_VII_L"/>
</dbReference>
<dbReference type="InterPro" id="IPR020579">
    <property type="entry name" value="Exonuc_VII_lsu_C"/>
</dbReference>
<dbReference type="InterPro" id="IPR025824">
    <property type="entry name" value="OB-fold_nuc-bd_dom"/>
</dbReference>
<dbReference type="NCBIfam" id="TIGR00237">
    <property type="entry name" value="xseA"/>
    <property type="match status" value="1"/>
</dbReference>
<dbReference type="PANTHER" id="PTHR30008">
    <property type="entry name" value="EXODEOXYRIBONUCLEASE 7 LARGE SUBUNIT"/>
    <property type="match status" value="1"/>
</dbReference>
<dbReference type="PANTHER" id="PTHR30008:SF0">
    <property type="entry name" value="EXODEOXYRIBONUCLEASE 7 LARGE SUBUNIT"/>
    <property type="match status" value="1"/>
</dbReference>
<dbReference type="Pfam" id="PF02601">
    <property type="entry name" value="Exonuc_VII_L"/>
    <property type="match status" value="2"/>
</dbReference>
<dbReference type="Pfam" id="PF13742">
    <property type="entry name" value="tRNA_anti_2"/>
    <property type="match status" value="1"/>
</dbReference>
<comment type="function">
    <text evidence="1">Bidirectionally degrades single-stranded DNA into large acid-insoluble oligonucleotides, which are then degraded further into small acid-soluble oligonucleotides.</text>
</comment>
<comment type="catalytic activity">
    <reaction evidence="1">
        <text>Exonucleolytic cleavage in either 5'- to 3'- or 3'- to 5'-direction to yield nucleoside 5'-phosphates.</text>
        <dbReference type="EC" id="3.1.11.6"/>
    </reaction>
</comment>
<comment type="subunit">
    <text evidence="1">Heterooligomer composed of large and small subunits.</text>
</comment>
<comment type="subcellular location">
    <subcellularLocation>
        <location evidence="1">Cytoplasm</location>
    </subcellularLocation>
</comment>
<comment type="similarity">
    <text evidence="1">Belongs to the XseA family.</text>
</comment>
<reference key="1">
    <citation type="journal article" date="2001" name="Science">
        <title>The genome of the natural genetic engineer Agrobacterium tumefaciens C58.</title>
        <authorList>
            <person name="Wood D.W."/>
            <person name="Setubal J.C."/>
            <person name="Kaul R."/>
            <person name="Monks D.E."/>
            <person name="Kitajima J.P."/>
            <person name="Okura V.K."/>
            <person name="Zhou Y."/>
            <person name="Chen L."/>
            <person name="Wood G.E."/>
            <person name="Almeida N.F. Jr."/>
            <person name="Woo L."/>
            <person name="Chen Y."/>
            <person name="Paulsen I.T."/>
            <person name="Eisen J.A."/>
            <person name="Karp P.D."/>
            <person name="Bovee D. Sr."/>
            <person name="Chapman P."/>
            <person name="Clendenning J."/>
            <person name="Deatherage G."/>
            <person name="Gillet W."/>
            <person name="Grant C."/>
            <person name="Kutyavin T."/>
            <person name="Levy R."/>
            <person name="Li M.-J."/>
            <person name="McClelland E."/>
            <person name="Palmieri A."/>
            <person name="Raymond C."/>
            <person name="Rouse G."/>
            <person name="Saenphimmachak C."/>
            <person name="Wu Z."/>
            <person name="Romero P."/>
            <person name="Gordon D."/>
            <person name="Zhang S."/>
            <person name="Yoo H."/>
            <person name="Tao Y."/>
            <person name="Biddle P."/>
            <person name="Jung M."/>
            <person name="Krespan W."/>
            <person name="Perry M."/>
            <person name="Gordon-Kamm B."/>
            <person name="Liao L."/>
            <person name="Kim S."/>
            <person name="Hendrick C."/>
            <person name="Zhao Z.-Y."/>
            <person name="Dolan M."/>
            <person name="Chumley F."/>
            <person name="Tingey S.V."/>
            <person name="Tomb J.-F."/>
            <person name="Gordon M.P."/>
            <person name="Olson M.V."/>
            <person name="Nester E.W."/>
        </authorList>
    </citation>
    <scope>NUCLEOTIDE SEQUENCE [LARGE SCALE GENOMIC DNA]</scope>
    <source>
        <strain>C58 / ATCC 33970</strain>
    </source>
</reference>
<reference key="2">
    <citation type="journal article" date="2001" name="Science">
        <title>Genome sequence of the plant pathogen and biotechnology agent Agrobacterium tumefaciens C58.</title>
        <authorList>
            <person name="Goodner B."/>
            <person name="Hinkle G."/>
            <person name="Gattung S."/>
            <person name="Miller N."/>
            <person name="Blanchard M."/>
            <person name="Qurollo B."/>
            <person name="Goldman B.S."/>
            <person name="Cao Y."/>
            <person name="Askenazi M."/>
            <person name="Halling C."/>
            <person name="Mullin L."/>
            <person name="Houmiel K."/>
            <person name="Gordon J."/>
            <person name="Vaudin M."/>
            <person name="Iartchouk O."/>
            <person name="Epp A."/>
            <person name="Liu F."/>
            <person name="Wollam C."/>
            <person name="Allinger M."/>
            <person name="Doughty D."/>
            <person name="Scott C."/>
            <person name="Lappas C."/>
            <person name="Markelz B."/>
            <person name="Flanagan C."/>
            <person name="Crowell C."/>
            <person name="Gurson J."/>
            <person name="Lomo C."/>
            <person name="Sear C."/>
            <person name="Strub G."/>
            <person name="Cielo C."/>
            <person name="Slater S."/>
        </authorList>
    </citation>
    <scope>NUCLEOTIDE SEQUENCE [LARGE SCALE GENOMIC DNA]</scope>
    <source>
        <strain>C58 / ATCC 33970</strain>
    </source>
</reference>
<name>EX7L_AGRFC</name>
<feature type="chain" id="PRO_0000197825" description="Exodeoxyribonuclease 7 large subunit">
    <location>
        <begin position="1"/>
        <end position="532"/>
    </location>
</feature>
<feature type="region of interest" description="Disordered" evidence="2">
    <location>
        <begin position="497"/>
        <end position="532"/>
    </location>
</feature>
<feature type="compositionally biased region" description="Low complexity" evidence="2">
    <location>
        <begin position="499"/>
        <end position="512"/>
    </location>
</feature>
<evidence type="ECO:0000255" key="1">
    <source>
        <dbReference type="HAMAP-Rule" id="MF_00378"/>
    </source>
</evidence>
<evidence type="ECO:0000256" key="2">
    <source>
        <dbReference type="SAM" id="MobiDB-lite"/>
    </source>
</evidence>
<keyword id="KW-0963">Cytoplasm</keyword>
<keyword id="KW-0269">Exonuclease</keyword>
<keyword id="KW-0378">Hydrolase</keyword>
<keyword id="KW-0540">Nuclease</keyword>
<keyword id="KW-1185">Reference proteome</keyword>
<sequence length="532" mass="57791">MSDIFSHTALSNLAEFSVSELSGSIKRTVETAFEQVRVRGEISGYRGPHSSGHAYFSLKDDRARIDAVIWKGTFSRLKFRPEEGMEVIATGKITTFPGSSKYQIVIESLEPAGAGALMALLEDRRRRLAAEGLFDSARKRPLPFMPRVIGVVTSPTGAVIRDILHRISDRFPVHVVVWPVKVQGEGSGEEVANAIRGFNALKPGGDIARPDVLIVARGGGSLEDLWSFNDEIVVRAAAESEIPLISAVGHETDTTLIDYAADVRAPTPTGAAEMAVPVRAELEAQLSGLAARLSGSVSRQMDNRRQGVRALVRALPSLDQLLALPRRRFDEAASGLGRGLELTTLNKRRAFERSASGLRPETLLNGLKHHRQRITERMHRAETLVERRLLQGKGRVDSFDSALRSLPARLLGQLERQKERVVTAARRADTAVLHRMAQNRSGLAAHDRILQSLSYKNVLNRGYAVIRDEENRPLTRAAAIASGAAVSMEFADGRVSAITTGEGTPAPETAAAPKKKPAKPASSDPGNQGNLF</sequence>
<organism>
    <name type="scientific">Agrobacterium fabrum (strain C58 / ATCC 33970)</name>
    <name type="common">Agrobacterium tumefaciens (strain C58)</name>
    <dbReference type="NCBI Taxonomy" id="176299"/>
    <lineage>
        <taxon>Bacteria</taxon>
        <taxon>Pseudomonadati</taxon>
        <taxon>Pseudomonadota</taxon>
        <taxon>Alphaproteobacteria</taxon>
        <taxon>Hyphomicrobiales</taxon>
        <taxon>Rhizobiaceae</taxon>
        <taxon>Rhizobium/Agrobacterium group</taxon>
        <taxon>Agrobacterium</taxon>
        <taxon>Agrobacterium tumefaciens complex</taxon>
    </lineage>
</organism>
<accession>Q8UIM4</accession>
<gene>
    <name evidence="1" type="primary">xseA</name>
    <name type="ordered locus">Atu0269</name>
    <name type="ORF">AGR_C_461</name>
</gene>